<gene>
    <name evidence="16" type="primary">Retnlg</name>
    <name evidence="8" type="synonym">Xcp1</name>
</gene>
<evidence type="ECO:0000250" key="1">
    <source>
        <dbReference type="UniProtKB" id="Q99P87"/>
    </source>
</evidence>
<evidence type="ECO:0000255" key="2"/>
<evidence type="ECO:0000269" key="3">
    <source>
    </source>
</evidence>
<evidence type="ECO:0000269" key="4">
    <source>
    </source>
</evidence>
<evidence type="ECO:0000269" key="5">
    <source>
    </source>
</evidence>
<evidence type="ECO:0000269" key="6">
    <source>
    </source>
</evidence>
<evidence type="ECO:0000303" key="7">
    <source>
    </source>
</evidence>
<evidence type="ECO:0000303" key="8">
    <source>
    </source>
</evidence>
<evidence type="ECO:0000305" key="9"/>
<evidence type="ECO:0000312" key="10">
    <source>
        <dbReference type="EMBL" id="AAI17107.1"/>
    </source>
</evidence>
<evidence type="ECO:0000312" key="11">
    <source>
        <dbReference type="EMBL" id="AAM46859.1"/>
    </source>
</evidence>
<evidence type="ECO:0000312" key="12">
    <source>
        <dbReference type="EMBL" id="BAC78641.1"/>
    </source>
</evidence>
<evidence type="ECO:0000312" key="13">
    <source>
        <dbReference type="EMBL" id="CAD56117.1"/>
    </source>
</evidence>
<evidence type="ECO:0000312" key="14">
    <source>
        <dbReference type="EMBL" id="CAD59912.1"/>
    </source>
</evidence>
<evidence type="ECO:0000312" key="15">
    <source>
        <dbReference type="EMBL" id="EDK98100.1"/>
    </source>
</evidence>
<evidence type="ECO:0000312" key="16">
    <source>
        <dbReference type="MGI" id="MGI:2667763"/>
    </source>
</evidence>
<evidence type="ECO:0000312" key="17">
    <source>
        <dbReference type="Proteomes" id="UP000000589"/>
    </source>
</evidence>
<name>RETNG_MOUSE</name>
<protein>
    <recommendedName>
        <fullName evidence="16">Resistin-like gamma</fullName>
    </recommendedName>
    <alternativeName>
        <fullName evidence="7">Resistin-like molecule gamma</fullName>
        <shortName evidence="7">RELMgamma</shortName>
    </alternativeName>
    <alternativeName>
        <fullName evidence="8">Ten-cysteine protein 1</fullName>
        <shortName evidence="8">XCP1</shortName>
    </alternativeName>
</protein>
<feature type="signal peptide" evidence="2">
    <location>
        <begin position="1"/>
        <end position="29"/>
    </location>
</feature>
<feature type="chain" id="PRO_5009715783" description="Resistin-like gamma">
    <location>
        <begin position="30"/>
        <end position="117"/>
    </location>
</feature>
<feature type="disulfide bond" evidence="1">
    <location>
        <begin position="61"/>
        <end position="114"/>
    </location>
</feature>
<feature type="disulfide bond" evidence="1">
    <location>
        <begin position="73"/>
        <end position="113"/>
    </location>
</feature>
<feature type="disulfide bond" evidence="1">
    <location>
        <begin position="82"/>
        <end position="99"/>
    </location>
</feature>
<feature type="disulfide bond" evidence="1">
    <location>
        <begin position="84"/>
        <end position="101"/>
    </location>
</feature>
<feature type="disulfide bond" evidence="1">
    <location>
        <begin position="88"/>
        <end position="103"/>
    </location>
</feature>
<dbReference type="EMBL" id="AJ514933">
    <property type="protein sequence ID" value="CAD56117.1"/>
    <property type="status" value="ALT_INIT"/>
    <property type="molecule type" value="mRNA"/>
</dbReference>
<dbReference type="EMBL" id="AJ536019">
    <property type="protein sequence ID" value="CAD59912.1"/>
    <property type="molecule type" value="mRNA"/>
</dbReference>
<dbReference type="EMBL" id="AF510097">
    <property type="protein sequence ID" value="AAM46859.1"/>
    <property type="molecule type" value="Genomic_DNA"/>
</dbReference>
<dbReference type="EMBL" id="AB086819">
    <property type="protein sequence ID" value="BAC78641.1"/>
    <property type="status" value="ALT_INIT"/>
    <property type="molecule type" value="mRNA"/>
</dbReference>
<dbReference type="EMBL" id="AK158401">
    <property type="protein sequence ID" value="BAE34489.1"/>
    <property type="molecule type" value="mRNA"/>
</dbReference>
<dbReference type="EMBL" id="AC154529">
    <property type="status" value="NOT_ANNOTATED_CDS"/>
    <property type="molecule type" value="Genomic_DNA"/>
</dbReference>
<dbReference type="EMBL" id="CH466521">
    <property type="protein sequence ID" value="EDK98100.1"/>
    <property type="molecule type" value="Genomic_DNA"/>
</dbReference>
<dbReference type="EMBL" id="CH466521">
    <property type="protein sequence ID" value="EDK98101.1"/>
    <property type="molecule type" value="Genomic_DNA"/>
</dbReference>
<dbReference type="EMBL" id="BC117106">
    <property type="protein sequence ID" value="AAI17107.1"/>
    <property type="status" value="ALT_INIT"/>
    <property type="molecule type" value="mRNA"/>
</dbReference>
<dbReference type="CCDS" id="CCDS49865.1"/>
<dbReference type="RefSeq" id="NP_853627.2">
    <property type="nucleotide sequence ID" value="NM_181596.4"/>
</dbReference>
<dbReference type="SMR" id="Q8K426"/>
<dbReference type="FunCoup" id="Q8K426">
    <property type="interactions" value="256"/>
</dbReference>
<dbReference type="STRING" id="10090.ENSMUSP00000070238"/>
<dbReference type="TCDB" id="9.B.329.1.3">
    <property type="family name" value="the resistin-like molecule (relm) family"/>
</dbReference>
<dbReference type="jPOST" id="Q8K426"/>
<dbReference type="PaxDb" id="10090-ENSMUSP00000070238"/>
<dbReference type="ProteomicsDB" id="255229"/>
<dbReference type="Ensembl" id="ENSMUST00000065666.6">
    <property type="protein sequence ID" value="ENSMUSP00000070238.5"/>
    <property type="gene ID" value="ENSMUSG00000022651.7"/>
</dbReference>
<dbReference type="GeneID" id="245195"/>
<dbReference type="KEGG" id="mmu:245195"/>
<dbReference type="UCSC" id="uc007zjw.2">
    <property type="organism name" value="mouse"/>
</dbReference>
<dbReference type="AGR" id="MGI:2667763"/>
<dbReference type="CTD" id="245195"/>
<dbReference type="MGI" id="MGI:2667763">
    <property type="gene designation" value="Retnlg"/>
</dbReference>
<dbReference type="VEuPathDB" id="HostDB:ENSMUSG00000022651"/>
<dbReference type="eggNOG" id="ENOG502RTZZ">
    <property type="taxonomic scope" value="Eukaryota"/>
</dbReference>
<dbReference type="GeneTree" id="ENSGT00390000016177"/>
<dbReference type="HOGENOM" id="CLU_150117_0_0_1"/>
<dbReference type="InParanoid" id="Q8K426"/>
<dbReference type="OMA" id="HKATGCA"/>
<dbReference type="OrthoDB" id="10065422at2759"/>
<dbReference type="PhylomeDB" id="Q8K426"/>
<dbReference type="TreeFam" id="TF337024"/>
<dbReference type="BioGRID-ORCS" id="245195">
    <property type="hits" value="3 hits in 76 CRISPR screens"/>
</dbReference>
<dbReference type="PRO" id="PR:Q8K426"/>
<dbReference type="Proteomes" id="UP000000589">
    <property type="component" value="Chromosome 16"/>
</dbReference>
<dbReference type="RNAct" id="Q8K426">
    <property type="molecule type" value="protein"/>
</dbReference>
<dbReference type="Bgee" id="ENSMUSG00000022651">
    <property type="expression patterns" value="Expressed in granulocyte and 39 other cell types or tissues"/>
</dbReference>
<dbReference type="GO" id="GO:0005615">
    <property type="term" value="C:extracellular space"/>
    <property type="evidence" value="ECO:0000314"/>
    <property type="project" value="MGI"/>
</dbReference>
<dbReference type="GO" id="GO:0005179">
    <property type="term" value="F:hormone activity"/>
    <property type="evidence" value="ECO:0007669"/>
    <property type="project" value="UniProtKB-KW"/>
</dbReference>
<dbReference type="GO" id="GO:0002408">
    <property type="term" value="P:myeloid dendritic cell chemotaxis"/>
    <property type="evidence" value="ECO:0000353"/>
    <property type="project" value="MGI"/>
</dbReference>
<dbReference type="CDD" id="cd16333">
    <property type="entry name" value="RELM"/>
    <property type="match status" value="1"/>
</dbReference>
<dbReference type="FunFam" id="2.60.40.4230:FF:000001">
    <property type="entry name" value="Resistin-like beta"/>
    <property type="match status" value="1"/>
</dbReference>
<dbReference type="Gene3D" id="2.60.40.4230">
    <property type="entry name" value="Resistin head domain"/>
    <property type="match status" value="1"/>
</dbReference>
<dbReference type="InterPro" id="IPR009714">
    <property type="entry name" value="RELM"/>
</dbReference>
<dbReference type="InterPro" id="IPR036262">
    <property type="entry name" value="Resistin-like_sf"/>
</dbReference>
<dbReference type="PANTHER" id="PTHR21101">
    <property type="entry name" value="RESISTIN"/>
    <property type="match status" value="1"/>
</dbReference>
<dbReference type="PANTHER" id="PTHR21101:SF14">
    <property type="entry name" value="RESISTIN-LIKE GAMMA"/>
    <property type="match status" value="1"/>
</dbReference>
<dbReference type="Pfam" id="PF06954">
    <property type="entry name" value="Resistin"/>
    <property type="match status" value="1"/>
</dbReference>
<dbReference type="SUPFAM" id="SSF111423">
    <property type="entry name" value="Resistin"/>
    <property type="match status" value="1"/>
</dbReference>
<organism>
    <name type="scientific">Mus musculus</name>
    <name type="common">Mouse</name>
    <dbReference type="NCBI Taxonomy" id="10090"/>
    <lineage>
        <taxon>Eukaryota</taxon>
        <taxon>Metazoa</taxon>
        <taxon>Chordata</taxon>
        <taxon>Craniata</taxon>
        <taxon>Vertebrata</taxon>
        <taxon>Euteleostomi</taxon>
        <taxon>Mammalia</taxon>
        <taxon>Eutheria</taxon>
        <taxon>Euarchontoglires</taxon>
        <taxon>Glires</taxon>
        <taxon>Rodentia</taxon>
        <taxon>Myomorpha</taxon>
        <taxon>Muroidea</taxon>
        <taxon>Muridae</taxon>
        <taxon>Murinae</taxon>
        <taxon>Mus</taxon>
        <taxon>Mus</taxon>
    </lineage>
</organism>
<reference evidence="13" key="1">
    <citation type="journal article" date="2003" name="Genomics">
        <title>Identification of RELMgamma, a novel resistin-like molecule with a distinct expression pattern.</title>
        <authorList>
            <person name="Gerstmayer B."/>
            <person name="Kuesters D."/>
            <person name="Gebel S."/>
            <person name="Mueller T."/>
            <person name="Van Miert E."/>
            <person name="Hofmann K."/>
            <person name="Bosio A."/>
        </authorList>
    </citation>
    <scope>NUCLEOTIDE SEQUENCE [MRNA]</scope>
    <scope>TISSUE SPECIFICITY</scope>
    <source>
        <strain evidence="13">CD-1</strain>
    </source>
</reference>
<reference evidence="14" key="2">
    <citation type="journal article" date="2004" name="Biochem. Biophys. Res. Commun.">
        <title>Cloning and functional characterization of resistin-like molecule gamma.</title>
        <authorList>
            <person name="Schinke T."/>
            <person name="Haberland M."/>
            <person name="Jamshidi A."/>
            <person name="Nollau P."/>
            <person name="Rueger J.M."/>
            <person name="Amling M."/>
        </authorList>
    </citation>
    <scope>NUCLEOTIDE SEQUENCE [MRNA]</scope>
    <scope>SUBCELLULAR LOCATION</scope>
    <scope>TISSUE SPECIFICITY</scope>
    <source>
        <strain evidence="14">C57BL/6J</strain>
        <tissue evidence="14">Bone marrow</tissue>
    </source>
</reference>
<reference evidence="11" key="3">
    <citation type="journal article" date="2004" name="Oncogene">
        <title>Identification of murine and human XCP1 genes as C/EBP-epsilon-dependent members of FIZZ/Resistin gene family.</title>
        <authorList>
            <person name="Chumakov A.M."/>
            <person name="Kubota T."/>
            <person name="Walter S."/>
            <person name="Koeffler H.P."/>
        </authorList>
    </citation>
    <scope>NUCLEOTIDE SEQUENCE [GENOMIC DNA]</scope>
    <scope>FUNCTION</scope>
    <scope>SUBCELLULAR LOCATION</scope>
    <scope>TISSUE SPECIFICITY</scope>
    <scope>DEVELOPMENTAL STAGE</scope>
</reference>
<reference evidence="12" key="4">
    <citation type="journal article" date="2005" name="Diabetologia">
        <title>Serum concentrations of resistin-like molecules beta and gamma are elevated in high-fat-fed and obese db/db mice, with increased production in the intestinal tract and bone marrow.</title>
        <authorList>
            <person name="Shojima N."/>
            <person name="Ogihara T."/>
            <person name="Inukai K."/>
            <person name="Fujishiro M."/>
            <person name="Sakoda H."/>
            <person name="Kushiyama A."/>
            <person name="Katagiri H."/>
            <person name="Anai M."/>
            <person name="Ono H."/>
            <person name="Fukushima Y."/>
            <person name="Horike N."/>
            <person name="Viana A.Y."/>
            <person name="Uchijima Y."/>
            <person name="Kurihara H."/>
            <person name="Asano T."/>
        </authorList>
    </citation>
    <scope>NUCLEOTIDE SEQUENCE [MRNA]</scope>
    <scope>SUBUNIT</scope>
    <scope>SUBCELLULAR LOCATION</scope>
    <scope>TISSUE SPECIFICITY</scope>
    <scope>INDUCTION</scope>
</reference>
<reference key="5">
    <citation type="journal article" date="2005" name="Science">
        <title>The transcriptional landscape of the mammalian genome.</title>
        <authorList>
            <person name="Carninci P."/>
            <person name="Kasukawa T."/>
            <person name="Katayama S."/>
            <person name="Gough J."/>
            <person name="Frith M.C."/>
            <person name="Maeda N."/>
            <person name="Oyama R."/>
            <person name="Ravasi T."/>
            <person name="Lenhard B."/>
            <person name="Wells C."/>
            <person name="Kodzius R."/>
            <person name="Shimokawa K."/>
            <person name="Bajic V.B."/>
            <person name="Brenner S.E."/>
            <person name="Batalov S."/>
            <person name="Forrest A.R."/>
            <person name="Zavolan M."/>
            <person name="Davis M.J."/>
            <person name="Wilming L.G."/>
            <person name="Aidinis V."/>
            <person name="Allen J.E."/>
            <person name="Ambesi-Impiombato A."/>
            <person name="Apweiler R."/>
            <person name="Aturaliya R.N."/>
            <person name="Bailey T.L."/>
            <person name="Bansal M."/>
            <person name="Baxter L."/>
            <person name="Beisel K.W."/>
            <person name="Bersano T."/>
            <person name="Bono H."/>
            <person name="Chalk A.M."/>
            <person name="Chiu K.P."/>
            <person name="Choudhary V."/>
            <person name="Christoffels A."/>
            <person name="Clutterbuck D.R."/>
            <person name="Crowe M.L."/>
            <person name="Dalla E."/>
            <person name="Dalrymple B.P."/>
            <person name="de Bono B."/>
            <person name="Della Gatta G."/>
            <person name="di Bernardo D."/>
            <person name="Down T."/>
            <person name="Engstrom P."/>
            <person name="Fagiolini M."/>
            <person name="Faulkner G."/>
            <person name="Fletcher C.F."/>
            <person name="Fukushima T."/>
            <person name="Furuno M."/>
            <person name="Futaki S."/>
            <person name="Gariboldi M."/>
            <person name="Georgii-Hemming P."/>
            <person name="Gingeras T.R."/>
            <person name="Gojobori T."/>
            <person name="Green R.E."/>
            <person name="Gustincich S."/>
            <person name="Harbers M."/>
            <person name="Hayashi Y."/>
            <person name="Hensch T.K."/>
            <person name="Hirokawa N."/>
            <person name="Hill D."/>
            <person name="Huminiecki L."/>
            <person name="Iacono M."/>
            <person name="Ikeo K."/>
            <person name="Iwama A."/>
            <person name="Ishikawa T."/>
            <person name="Jakt M."/>
            <person name="Kanapin A."/>
            <person name="Katoh M."/>
            <person name="Kawasawa Y."/>
            <person name="Kelso J."/>
            <person name="Kitamura H."/>
            <person name="Kitano H."/>
            <person name="Kollias G."/>
            <person name="Krishnan S.P."/>
            <person name="Kruger A."/>
            <person name="Kummerfeld S.K."/>
            <person name="Kurochkin I.V."/>
            <person name="Lareau L.F."/>
            <person name="Lazarevic D."/>
            <person name="Lipovich L."/>
            <person name="Liu J."/>
            <person name="Liuni S."/>
            <person name="McWilliam S."/>
            <person name="Madan Babu M."/>
            <person name="Madera M."/>
            <person name="Marchionni L."/>
            <person name="Matsuda H."/>
            <person name="Matsuzawa S."/>
            <person name="Miki H."/>
            <person name="Mignone F."/>
            <person name="Miyake S."/>
            <person name="Morris K."/>
            <person name="Mottagui-Tabar S."/>
            <person name="Mulder N."/>
            <person name="Nakano N."/>
            <person name="Nakauchi H."/>
            <person name="Ng P."/>
            <person name="Nilsson R."/>
            <person name="Nishiguchi S."/>
            <person name="Nishikawa S."/>
            <person name="Nori F."/>
            <person name="Ohara O."/>
            <person name="Okazaki Y."/>
            <person name="Orlando V."/>
            <person name="Pang K.C."/>
            <person name="Pavan W.J."/>
            <person name="Pavesi G."/>
            <person name="Pesole G."/>
            <person name="Petrovsky N."/>
            <person name="Piazza S."/>
            <person name="Reed J."/>
            <person name="Reid J.F."/>
            <person name="Ring B.Z."/>
            <person name="Ringwald M."/>
            <person name="Rost B."/>
            <person name="Ruan Y."/>
            <person name="Salzberg S.L."/>
            <person name="Sandelin A."/>
            <person name="Schneider C."/>
            <person name="Schoenbach C."/>
            <person name="Sekiguchi K."/>
            <person name="Semple C.A."/>
            <person name="Seno S."/>
            <person name="Sessa L."/>
            <person name="Sheng Y."/>
            <person name="Shibata Y."/>
            <person name="Shimada H."/>
            <person name="Shimada K."/>
            <person name="Silva D."/>
            <person name="Sinclair B."/>
            <person name="Sperling S."/>
            <person name="Stupka E."/>
            <person name="Sugiura K."/>
            <person name="Sultana R."/>
            <person name="Takenaka Y."/>
            <person name="Taki K."/>
            <person name="Tammoja K."/>
            <person name="Tan S.L."/>
            <person name="Tang S."/>
            <person name="Taylor M.S."/>
            <person name="Tegner J."/>
            <person name="Teichmann S.A."/>
            <person name="Ueda H.R."/>
            <person name="van Nimwegen E."/>
            <person name="Verardo R."/>
            <person name="Wei C.L."/>
            <person name="Yagi K."/>
            <person name="Yamanishi H."/>
            <person name="Zabarovsky E."/>
            <person name="Zhu S."/>
            <person name="Zimmer A."/>
            <person name="Hide W."/>
            <person name="Bult C."/>
            <person name="Grimmond S.M."/>
            <person name="Teasdale R.D."/>
            <person name="Liu E.T."/>
            <person name="Brusic V."/>
            <person name="Quackenbush J."/>
            <person name="Wahlestedt C."/>
            <person name="Mattick J.S."/>
            <person name="Hume D.A."/>
            <person name="Kai C."/>
            <person name="Sasaki D."/>
            <person name="Tomaru Y."/>
            <person name="Fukuda S."/>
            <person name="Kanamori-Katayama M."/>
            <person name="Suzuki M."/>
            <person name="Aoki J."/>
            <person name="Arakawa T."/>
            <person name="Iida J."/>
            <person name="Imamura K."/>
            <person name="Itoh M."/>
            <person name="Kato T."/>
            <person name="Kawaji H."/>
            <person name="Kawagashira N."/>
            <person name="Kawashima T."/>
            <person name="Kojima M."/>
            <person name="Kondo S."/>
            <person name="Konno H."/>
            <person name="Nakano K."/>
            <person name="Ninomiya N."/>
            <person name="Nishio T."/>
            <person name="Okada M."/>
            <person name="Plessy C."/>
            <person name="Shibata K."/>
            <person name="Shiraki T."/>
            <person name="Suzuki S."/>
            <person name="Tagami M."/>
            <person name="Waki K."/>
            <person name="Watahiki A."/>
            <person name="Okamura-Oho Y."/>
            <person name="Suzuki H."/>
            <person name="Kawai J."/>
            <person name="Hayashizaki Y."/>
        </authorList>
    </citation>
    <scope>NUCLEOTIDE SEQUENCE [LARGE SCALE MRNA]</scope>
    <source>
        <strain>C57BL/6J</strain>
        <tissue>Inner ear</tissue>
    </source>
</reference>
<reference evidence="17" key="6">
    <citation type="journal article" date="2009" name="PLoS Biol.">
        <title>Lineage-specific biology revealed by a finished genome assembly of the mouse.</title>
        <authorList>
            <person name="Church D.M."/>
            <person name="Goodstadt L."/>
            <person name="Hillier L.W."/>
            <person name="Zody M.C."/>
            <person name="Goldstein S."/>
            <person name="She X."/>
            <person name="Bult C.J."/>
            <person name="Agarwala R."/>
            <person name="Cherry J.L."/>
            <person name="DiCuccio M."/>
            <person name="Hlavina W."/>
            <person name="Kapustin Y."/>
            <person name="Meric P."/>
            <person name="Maglott D."/>
            <person name="Birtle Z."/>
            <person name="Marques A.C."/>
            <person name="Graves T."/>
            <person name="Zhou S."/>
            <person name="Teague B."/>
            <person name="Potamousis K."/>
            <person name="Churas C."/>
            <person name="Place M."/>
            <person name="Herschleb J."/>
            <person name="Runnheim R."/>
            <person name="Forrest D."/>
            <person name="Amos-Landgraf J."/>
            <person name="Schwartz D.C."/>
            <person name="Cheng Z."/>
            <person name="Lindblad-Toh K."/>
            <person name="Eichler E.E."/>
            <person name="Ponting C.P."/>
        </authorList>
    </citation>
    <scope>NUCLEOTIDE SEQUENCE [LARGE SCALE GENOMIC DNA]</scope>
    <source>
        <strain>C57BL/6J</strain>
    </source>
</reference>
<reference evidence="15" key="7">
    <citation type="submission" date="2005-07" db="EMBL/GenBank/DDBJ databases">
        <authorList>
            <person name="Mural R.J."/>
            <person name="Adams M.D."/>
            <person name="Myers E.W."/>
            <person name="Smith H.O."/>
            <person name="Venter J.C."/>
        </authorList>
    </citation>
    <scope>NUCLEOTIDE SEQUENCE [LARGE SCALE GENOMIC DNA]</scope>
</reference>
<reference evidence="10" key="8">
    <citation type="journal article" date="2004" name="Genome Res.">
        <title>The status, quality, and expansion of the NIH full-length cDNA project: the Mammalian Gene Collection (MGC).</title>
        <authorList>
            <consortium name="The MGC Project Team"/>
        </authorList>
    </citation>
    <scope>NUCLEOTIDE SEQUENCE [LARGE SCALE MRNA]</scope>
    <source>
        <tissue evidence="10">Brain</tissue>
    </source>
</reference>
<sequence>MLTFNKMKTTTCSLLICISLLQLMVPVNTEGTLESIVEKKVKELLANRDDCPSTVTKTFSCTSITASGRLASCPSGMTVTGCACGYGCGSWDIRDGNTCHCQCSTMDWATARCCQLA</sequence>
<proteinExistence type="evidence at protein level"/>
<keyword id="KW-1015">Disulfide bond</keyword>
<keyword id="KW-0372">Hormone</keyword>
<keyword id="KW-1185">Reference proteome</keyword>
<keyword id="KW-0964">Secreted</keyword>
<keyword id="KW-0732">Signal</keyword>
<comment type="function">
    <text evidence="5 9">Probable hormone (Probable). Promotes chemotaxis in myeloid cells (PubMed:15064728).</text>
</comment>
<comment type="subunit">
    <text evidence="6">Homodimer. Heterodimer with RETNLB.</text>
</comment>
<comment type="subcellular location">
    <subcellularLocation>
        <location evidence="4 5 6">Secreted</location>
    </subcellularLocation>
</comment>
<comment type="tissue specificity">
    <text evidence="3 4 5 6">Expressed in colon, lung, spleen, pancreas, ileum and bone marrow (at protein level) (PubMed:15834545). In colon, found throughout the crypt and surface epithelium, including goblet cells (at protein level) (PubMed:15834545). Highest expression is observed in bone marrow, spleen and lung, with lower levels in other tissues (PubMed:12782128, PubMed:14733912, PubMed:15064728, PubMed:15834545). Detected at low levels in granulocytes, but not found in monocytes or lymphocytes (PubMed:14733912). Has very weak expression in white adipose tissue (PubMed:12782128).</text>
</comment>
<comment type="developmental stage">
    <text evidence="5">In liver, strongly expressed at 18 dpc and at birth, and then rapidly declines. In pancreas, strongly expressed at birth with decreasing expression after 4 days of age. Also shows strong expression in neonatal gut, lung and heart.</text>
</comment>
<comment type="induction">
    <text evidence="6">Up-regulated in colon and bone marrow in response to a high-fat diet. Also up-regulated in obese mice mutant for the leptin receptor LEPR (db/db genotype).</text>
</comment>
<comment type="similarity">
    <text evidence="9">Belongs to the resistin/FIZZ family.</text>
</comment>
<comment type="sequence caution" evidence="9">
    <conflict type="erroneous initiation">
        <sequence resource="EMBL-CDS" id="AAI17107"/>
    </conflict>
    <text>Truncated N-terminus.</text>
</comment>
<comment type="sequence caution" evidence="9">
    <conflict type="erroneous initiation">
        <sequence resource="EMBL-CDS" id="BAC78641"/>
    </conflict>
    <text>Truncated N-terminus.</text>
</comment>
<comment type="sequence caution" evidence="9">
    <conflict type="erroneous initiation">
        <sequence resource="EMBL-CDS" id="CAD56117"/>
    </conflict>
    <text>Truncated N-terminus.</text>
</comment>
<accession>Q8K426</accession>
<accession>Q7TM98</accession>